<comment type="subunit">
    <text evidence="1">Part of the 50S ribosomal subunit.</text>
</comment>
<comment type="subcellular location">
    <subcellularLocation>
        <location>Plastid</location>
        <location>Chloroplast</location>
    </subcellularLocation>
</comment>
<comment type="similarity">
    <text evidence="1">Belongs to the universal ribosomal protein uL16 family.</text>
</comment>
<reference key="1">
    <citation type="journal article" date="2006" name="Theor. Appl. Genet.">
        <title>Complete chloroplast genome sequences of Solanum bulbocastanum, Solanum lycopersicum and comparative analyses with other Solanaceae genomes.</title>
        <authorList>
            <person name="Daniell H."/>
            <person name="Lee S.-B."/>
            <person name="Grevich J."/>
            <person name="Saski C."/>
            <person name="Quesada-Vargas T."/>
            <person name="Guda C."/>
            <person name="Tomkins J."/>
            <person name="Jansen R.K."/>
        </authorList>
    </citation>
    <scope>NUCLEOTIDE SEQUENCE [LARGE SCALE GENOMIC DNA]</scope>
    <source>
        <strain>cv. LA3023</strain>
    </source>
</reference>
<reference key="2">
    <citation type="journal article" date="2006" name="J. Mol. Evol.">
        <title>Sequence of the tomato chloroplast DNA and evolutionary comparison of solanaceous plastid genomes.</title>
        <authorList>
            <person name="Kahlau S."/>
            <person name="Aspinall S."/>
            <person name="Gray J.C."/>
            <person name="Bock R."/>
        </authorList>
    </citation>
    <scope>NUCLEOTIDE SEQUENCE [LARGE SCALE GENOMIC DNA]</scope>
    <source>
        <strain>cv. IPA-6</strain>
    </source>
</reference>
<protein>
    <recommendedName>
        <fullName evidence="1">Large ribosomal subunit protein uL16c</fullName>
    </recommendedName>
    <alternativeName>
        <fullName evidence="2">50S ribosomal protein L16, chloroplastic</fullName>
    </alternativeName>
</protein>
<proteinExistence type="inferred from homology"/>
<evidence type="ECO:0000255" key="1">
    <source>
        <dbReference type="HAMAP-Rule" id="MF_01342"/>
    </source>
</evidence>
<evidence type="ECO:0000305" key="2"/>
<accession>Q2MI63</accession>
<sequence length="134" mass="15259">MLSPKRTRFRKQHRGRMKGISYRGNRISFGKYALQALEPAWITSRQIEAGRRAMTRNARRGGKIWVRIFPDKPVTLRPAETRMGSGKGSPEYWVAVVKPGRILYEMGGVTENIARRAISLAASKMPIRTQFIIS</sequence>
<gene>
    <name evidence="1" type="primary">rpl16</name>
</gene>
<geneLocation type="chloroplast"/>
<name>RK16_SOLLC</name>
<feature type="chain" id="PRO_0000251694" description="Large ribosomal subunit protein uL16c">
    <location>
        <begin position="1"/>
        <end position="134"/>
    </location>
</feature>
<keyword id="KW-0150">Chloroplast</keyword>
<keyword id="KW-0934">Plastid</keyword>
<keyword id="KW-1185">Reference proteome</keyword>
<keyword id="KW-0687">Ribonucleoprotein</keyword>
<keyword id="KW-0689">Ribosomal protein</keyword>
<organism>
    <name type="scientific">Solanum lycopersicum</name>
    <name type="common">Tomato</name>
    <name type="synonym">Lycopersicon esculentum</name>
    <dbReference type="NCBI Taxonomy" id="4081"/>
    <lineage>
        <taxon>Eukaryota</taxon>
        <taxon>Viridiplantae</taxon>
        <taxon>Streptophyta</taxon>
        <taxon>Embryophyta</taxon>
        <taxon>Tracheophyta</taxon>
        <taxon>Spermatophyta</taxon>
        <taxon>Magnoliopsida</taxon>
        <taxon>eudicotyledons</taxon>
        <taxon>Gunneridae</taxon>
        <taxon>Pentapetalae</taxon>
        <taxon>asterids</taxon>
        <taxon>lamiids</taxon>
        <taxon>Solanales</taxon>
        <taxon>Solanaceae</taxon>
        <taxon>Solanoideae</taxon>
        <taxon>Solaneae</taxon>
        <taxon>Solanum</taxon>
        <taxon>Solanum subgen. Lycopersicon</taxon>
    </lineage>
</organism>
<dbReference type="EMBL" id="DQ347959">
    <property type="protein sequence ID" value="ABC56337.1"/>
    <property type="molecule type" value="Genomic_DNA"/>
</dbReference>
<dbReference type="EMBL" id="AM087200">
    <property type="protein sequence ID" value="CAJ32431.1"/>
    <property type="molecule type" value="Genomic_DNA"/>
</dbReference>
<dbReference type="RefSeq" id="AP_004965.1">
    <property type="nucleotide sequence ID" value="AC_000188.1"/>
</dbReference>
<dbReference type="RefSeq" id="YP_008563126.1">
    <property type="nucleotide sequence ID" value="NC_007898.3"/>
</dbReference>
<dbReference type="SMR" id="Q2MI63"/>
<dbReference type="FunCoup" id="Q2MI63">
    <property type="interactions" value="956"/>
</dbReference>
<dbReference type="STRING" id="4081.Q2MI63"/>
<dbReference type="PaxDb" id="4081-Solyc01g007600.2.1"/>
<dbReference type="GeneID" id="3950427"/>
<dbReference type="KEGG" id="sly:3950427"/>
<dbReference type="eggNOG" id="KOG3422">
    <property type="taxonomic scope" value="Eukaryota"/>
</dbReference>
<dbReference type="InParanoid" id="Q2MI63"/>
<dbReference type="OrthoDB" id="1850746at2759"/>
<dbReference type="Proteomes" id="UP000004994">
    <property type="component" value="Chloroplast"/>
</dbReference>
<dbReference type="ExpressionAtlas" id="Q2MI63">
    <property type="expression patterns" value="baseline"/>
</dbReference>
<dbReference type="GO" id="GO:0009507">
    <property type="term" value="C:chloroplast"/>
    <property type="evidence" value="ECO:0007669"/>
    <property type="project" value="UniProtKB-SubCell"/>
</dbReference>
<dbReference type="GO" id="GO:0005762">
    <property type="term" value="C:mitochondrial large ribosomal subunit"/>
    <property type="evidence" value="ECO:0000318"/>
    <property type="project" value="GO_Central"/>
</dbReference>
<dbReference type="GO" id="GO:0019843">
    <property type="term" value="F:rRNA binding"/>
    <property type="evidence" value="ECO:0000318"/>
    <property type="project" value="GO_Central"/>
</dbReference>
<dbReference type="GO" id="GO:0003735">
    <property type="term" value="F:structural constituent of ribosome"/>
    <property type="evidence" value="ECO:0000318"/>
    <property type="project" value="GO_Central"/>
</dbReference>
<dbReference type="GO" id="GO:0032543">
    <property type="term" value="P:mitochondrial translation"/>
    <property type="evidence" value="ECO:0000318"/>
    <property type="project" value="GO_Central"/>
</dbReference>
<dbReference type="CDD" id="cd01433">
    <property type="entry name" value="Ribosomal_L16_L10e"/>
    <property type="match status" value="1"/>
</dbReference>
<dbReference type="FunFam" id="3.90.1170.10:FF:000001">
    <property type="entry name" value="50S ribosomal protein L16"/>
    <property type="match status" value="1"/>
</dbReference>
<dbReference type="Gene3D" id="3.90.1170.10">
    <property type="entry name" value="Ribosomal protein L10e/L16"/>
    <property type="match status" value="1"/>
</dbReference>
<dbReference type="HAMAP" id="MF_01342">
    <property type="entry name" value="Ribosomal_uL16"/>
    <property type="match status" value="1"/>
</dbReference>
<dbReference type="InterPro" id="IPR047873">
    <property type="entry name" value="Ribosomal_uL16"/>
</dbReference>
<dbReference type="InterPro" id="IPR000114">
    <property type="entry name" value="Ribosomal_uL16_bact-type"/>
</dbReference>
<dbReference type="InterPro" id="IPR020798">
    <property type="entry name" value="Ribosomal_uL16_CS"/>
</dbReference>
<dbReference type="InterPro" id="IPR016180">
    <property type="entry name" value="Ribosomal_uL16_dom"/>
</dbReference>
<dbReference type="InterPro" id="IPR036920">
    <property type="entry name" value="Ribosomal_uL16_sf"/>
</dbReference>
<dbReference type="NCBIfam" id="TIGR01164">
    <property type="entry name" value="rplP_bact"/>
    <property type="match status" value="1"/>
</dbReference>
<dbReference type="PANTHER" id="PTHR12220">
    <property type="entry name" value="50S/60S RIBOSOMAL PROTEIN L16"/>
    <property type="match status" value="1"/>
</dbReference>
<dbReference type="PANTHER" id="PTHR12220:SF13">
    <property type="entry name" value="LARGE RIBOSOMAL SUBUNIT PROTEIN UL16M"/>
    <property type="match status" value="1"/>
</dbReference>
<dbReference type="Pfam" id="PF00252">
    <property type="entry name" value="Ribosomal_L16"/>
    <property type="match status" value="1"/>
</dbReference>
<dbReference type="PRINTS" id="PR00060">
    <property type="entry name" value="RIBOSOMALL16"/>
</dbReference>
<dbReference type="SUPFAM" id="SSF54686">
    <property type="entry name" value="Ribosomal protein L16p/L10e"/>
    <property type="match status" value="1"/>
</dbReference>
<dbReference type="PROSITE" id="PS00586">
    <property type="entry name" value="RIBOSOMAL_L16_1"/>
    <property type="match status" value="1"/>
</dbReference>
<dbReference type="PROSITE" id="PS00701">
    <property type="entry name" value="RIBOSOMAL_L16_2"/>
    <property type="match status" value="1"/>
</dbReference>